<proteinExistence type="inferred from homology"/>
<accession>O21540</accession>
<comment type="function">
    <text evidence="1">Core subunit of the mitochondrial membrane respiratory chain NADH dehydrogenase (Complex I) which catalyzes electron transfer from NADH through the respiratory chain, using ubiquinone as an electron acceptor. Essential for the catalytic activity of complex I.</text>
</comment>
<comment type="catalytic activity">
    <reaction evidence="1">
        <text>a ubiquinone + NADH + 5 H(+)(in) = a ubiquinol + NAD(+) + 4 H(+)(out)</text>
        <dbReference type="Rhea" id="RHEA:29091"/>
        <dbReference type="Rhea" id="RHEA-COMP:9565"/>
        <dbReference type="Rhea" id="RHEA-COMP:9566"/>
        <dbReference type="ChEBI" id="CHEBI:15378"/>
        <dbReference type="ChEBI" id="CHEBI:16389"/>
        <dbReference type="ChEBI" id="CHEBI:17976"/>
        <dbReference type="ChEBI" id="CHEBI:57540"/>
        <dbReference type="ChEBI" id="CHEBI:57945"/>
        <dbReference type="EC" id="7.1.1.2"/>
    </reaction>
</comment>
<comment type="subunit">
    <text evidence="1">Core subunit of respiratory chain NADH dehydrogenase (Complex I) which is composed of 45 different subunits. Interacts with TMEM186. Interacts with TMEM242 (By similarity).</text>
</comment>
<comment type="subcellular location">
    <subcellularLocation>
        <location evidence="2">Mitochondrion inner membrane</location>
        <topology evidence="3">Multi-pass membrane protein</topology>
    </subcellularLocation>
</comment>
<comment type="similarity">
    <text evidence="4">Belongs to the complex I subunit 3 family.</text>
</comment>
<evidence type="ECO:0000250" key="1">
    <source>
        <dbReference type="UniProtKB" id="P03897"/>
    </source>
</evidence>
<evidence type="ECO:0000250" key="2">
    <source>
        <dbReference type="UniProtKB" id="P03898"/>
    </source>
</evidence>
<evidence type="ECO:0000255" key="3"/>
<evidence type="ECO:0000305" key="4"/>
<feature type="chain" id="PRO_0000117715" description="NADH-ubiquinone oxidoreductase chain 3">
    <location>
        <begin position="1"/>
        <end position="115"/>
    </location>
</feature>
<feature type="transmembrane region" description="Helical" evidence="3">
    <location>
        <begin position="4"/>
        <end position="24"/>
    </location>
</feature>
<feature type="transmembrane region" description="Helical" evidence="3">
    <location>
        <begin position="55"/>
        <end position="75"/>
    </location>
</feature>
<feature type="transmembrane region" description="Helical" evidence="3">
    <location>
        <begin position="84"/>
        <end position="104"/>
    </location>
</feature>
<protein>
    <recommendedName>
        <fullName evidence="1">NADH-ubiquinone oxidoreductase chain 3</fullName>
        <ecNumber evidence="1">7.1.1.2</ecNumber>
    </recommendedName>
    <alternativeName>
        <fullName>NADH dehydrogenase subunit 3</fullName>
    </alternativeName>
</protein>
<organism>
    <name type="scientific">Necromys lactens</name>
    <name type="common">Rufous-bellied bolo mouse</name>
    <name type="synonym">Bolomys lactens</name>
    <dbReference type="NCBI Taxonomy" id="56217"/>
    <lineage>
        <taxon>Eukaryota</taxon>
        <taxon>Metazoa</taxon>
        <taxon>Chordata</taxon>
        <taxon>Craniata</taxon>
        <taxon>Vertebrata</taxon>
        <taxon>Euteleostomi</taxon>
        <taxon>Mammalia</taxon>
        <taxon>Eutheria</taxon>
        <taxon>Euarchontoglires</taxon>
        <taxon>Glires</taxon>
        <taxon>Rodentia</taxon>
        <taxon>Myomorpha</taxon>
        <taxon>Muroidea</taxon>
        <taxon>Cricetidae</taxon>
        <taxon>Sigmodontinae</taxon>
        <taxon>Necromys</taxon>
    </lineage>
</organism>
<sequence length="115" mass="13051">MNMILTLFINITLSLCLISIAFWLPQLNAYTEKASPYECGFDPMSSARLPFSMKFFLVGITFLLFDLEIALLLPLPWAIHSTNSYLTMTVSFMLVSALALGLAYEWLNKGLEWTE</sequence>
<keyword id="KW-0249">Electron transport</keyword>
<keyword id="KW-0472">Membrane</keyword>
<keyword id="KW-0496">Mitochondrion</keyword>
<keyword id="KW-0999">Mitochondrion inner membrane</keyword>
<keyword id="KW-0520">NAD</keyword>
<keyword id="KW-0679">Respiratory chain</keyword>
<keyword id="KW-1278">Translocase</keyword>
<keyword id="KW-0812">Transmembrane</keyword>
<keyword id="KW-1133">Transmembrane helix</keyword>
<keyword id="KW-0813">Transport</keyword>
<keyword id="KW-0830">Ubiquinone</keyword>
<gene>
    <name evidence="1" type="primary">MT-ND3</name>
    <name type="synonym">MTND3</name>
    <name type="synonym">NADH3</name>
    <name type="synonym">ND3</name>
</gene>
<reference key="1">
    <citation type="journal article" date="1998" name="Mol. Biol. Evol.">
        <title>Molecular systematics and paleobiogeography of the South American sigmodontine rodents.</title>
        <authorList>
            <person name="Engel S.R."/>
            <person name="Hogan K.M."/>
            <person name="Taylor J.F."/>
            <person name="Davis S.K."/>
        </authorList>
    </citation>
    <scope>NUCLEOTIDE SEQUENCE [GENOMIC DNA]</scope>
</reference>
<name>NU3M_NECLA</name>
<dbReference type="EC" id="7.1.1.2" evidence="1"/>
<dbReference type="EMBL" id="U83813">
    <property type="protein sequence ID" value="AAB87157.1"/>
    <property type="molecule type" value="Genomic_DNA"/>
</dbReference>
<dbReference type="SMR" id="O21540"/>
<dbReference type="GO" id="GO:0005743">
    <property type="term" value="C:mitochondrial inner membrane"/>
    <property type="evidence" value="ECO:0000250"/>
    <property type="project" value="UniProtKB"/>
</dbReference>
<dbReference type="GO" id="GO:0030964">
    <property type="term" value="C:NADH dehydrogenase complex"/>
    <property type="evidence" value="ECO:0007669"/>
    <property type="project" value="TreeGrafter"/>
</dbReference>
<dbReference type="GO" id="GO:0008137">
    <property type="term" value="F:NADH dehydrogenase (ubiquinone) activity"/>
    <property type="evidence" value="ECO:0000250"/>
    <property type="project" value="UniProtKB"/>
</dbReference>
<dbReference type="GO" id="GO:0006120">
    <property type="term" value="P:mitochondrial electron transport, NADH to ubiquinone"/>
    <property type="evidence" value="ECO:0000250"/>
    <property type="project" value="UniProtKB"/>
</dbReference>
<dbReference type="FunFam" id="1.20.58.1610:FF:000004">
    <property type="entry name" value="NADH-quinone oxidoreductase subunit A"/>
    <property type="match status" value="1"/>
</dbReference>
<dbReference type="Gene3D" id="1.20.58.1610">
    <property type="entry name" value="NADH:ubiquinone/plastoquinone oxidoreductase, chain 3"/>
    <property type="match status" value="1"/>
</dbReference>
<dbReference type="InterPro" id="IPR000440">
    <property type="entry name" value="NADH_UbQ/plastoQ_OxRdtase_su3"/>
</dbReference>
<dbReference type="InterPro" id="IPR038430">
    <property type="entry name" value="NDAH_ubi_oxred_su3_sf"/>
</dbReference>
<dbReference type="PANTHER" id="PTHR11058">
    <property type="entry name" value="NADH-UBIQUINONE OXIDOREDUCTASE CHAIN 3"/>
    <property type="match status" value="1"/>
</dbReference>
<dbReference type="PANTHER" id="PTHR11058:SF9">
    <property type="entry name" value="NADH-UBIQUINONE OXIDOREDUCTASE CHAIN 3"/>
    <property type="match status" value="1"/>
</dbReference>
<dbReference type="Pfam" id="PF00507">
    <property type="entry name" value="Oxidored_q4"/>
    <property type="match status" value="1"/>
</dbReference>
<geneLocation type="mitochondrion"/>